<keyword id="KW-1185">Reference proteome</keyword>
<keyword id="KW-0687">Ribonucleoprotein</keyword>
<keyword id="KW-0689">Ribosomal protein</keyword>
<keyword id="KW-0694">RNA-binding</keyword>
<keyword id="KW-0699">rRNA-binding</keyword>
<keyword id="KW-0820">tRNA-binding</keyword>
<comment type="function">
    <text evidence="1">Located at the top of the head of the 30S subunit, it contacts several helices of the 16S rRNA. In the 70S ribosome it contacts the 23S rRNA (bridge B1a) and protein L5 of the 50S subunit (bridge B1b), connecting the 2 subunits; these bridges are implicated in subunit movement. Contacts the tRNAs in the A and P-sites.</text>
</comment>
<comment type="subunit">
    <text evidence="1">Part of the 30S ribosomal subunit. Forms a loose heterodimer with protein S19. Forms two bridges to the 50S subunit in the 70S ribosome.</text>
</comment>
<comment type="similarity">
    <text evidence="1">Belongs to the universal ribosomal protein uS13 family.</text>
</comment>
<sequence length="118" mass="13358">MARIAGVNIPENKHTVISLTYIFGIGRTRAESICATTGIEQTAKVRELTGEQLDAIRGEVAKFSTEGDLRREINMNIKRLMDLGCYRGIRHRRGLPLRGQRTKTNARTRKGPRKPIRK</sequence>
<dbReference type="EMBL" id="AM286690">
    <property type="protein sequence ID" value="CAL15867.1"/>
    <property type="molecule type" value="Genomic_DNA"/>
</dbReference>
<dbReference type="RefSeq" id="WP_011587705.1">
    <property type="nucleotide sequence ID" value="NC_008260.1"/>
</dbReference>
<dbReference type="SMR" id="Q0VSI1"/>
<dbReference type="STRING" id="393595.ABO_0419"/>
<dbReference type="KEGG" id="abo:ABO_0419"/>
<dbReference type="eggNOG" id="COG0099">
    <property type="taxonomic scope" value="Bacteria"/>
</dbReference>
<dbReference type="HOGENOM" id="CLU_103849_1_2_6"/>
<dbReference type="OrthoDB" id="9803610at2"/>
<dbReference type="Proteomes" id="UP000008871">
    <property type="component" value="Chromosome"/>
</dbReference>
<dbReference type="GO" id="GO:0005829">
    <property type="term" value="C:cytosol"/>
    <property type="evidence" value="ECO:0007669"/>
    <property type="project" value="TreeGrafter"/>
</dbReference>
<dbReference type="GO" id="GO:0015935">
    <property type="term" value="C:small ribosomal subunit"/>
    <property type="evidence" value="ECO:0007669"/>
    <property type="project" value="TreeGrafter"/>
</dbReference>
<dbReference type="GO" id="GO:0019843">
    <property type="term" value="F:rRNA binding"/>
    <property type="evidence" value="ECO:0007669"/>
    <property type="project" value="UniProtKB-UniRule"/>
</dbReference>
<dbReference type="GO" id="GO:0003735">
    <property type="term" value="F:structural constituent of ribosome"/>
    <property type="evidence" value="ECO:0007669"/>
    <property type="project" value="InterPro"/>
</dbReference>
<dbReference type="GO" id="GO:0000049">
    <property type="term" value="F:tRNA binding"/>
    <property type="evidence" value="ECO:0007669"/>
    <property type="project" value="UniProtKB-UniRule"/>
</dbReference>
<dbReference type="GO" id="GO:0006412">
    <property type="term" value="P:translation"/>
    <property type="evidence" value="ECO:0007669"/>
    <property type="project" value="UniProtKB-UniRule"/>
</dbReference>
<dbReference type="FunFam" id="1.10.8.50:FF:000001">
    <property type="entry name" value="30S ribosomal protein S13"/>
    <property type="match status" value="1"/>
</dbReference>
<dbReference type="FunFam" id="4.10.910.10:FF:000001">
    <property type="entry name" value="30S ribosomal protein S13"/>
    <property type="match status" value="1"/>
</dbReference>
<dbReference type="Gene3D" id="1.10.8.50">
    <property type="match status" value="1"/>
</dbReference>
<dbReference type="Gene3D" id="4.10.910.10">
    <property type="entry name" value="30s ribosomal protein s13, domain 2"/>
    <property type="match status" value="1"/>
</dbReference>
<dbReference type="HAMAP" id="MF_01315">
    <property type="entry name" value="Ribosomal_uS13"/>
    <property type="match status" value="1"/>
</dbReference>
<dbReference type="InterPro" id="IPR027437">
    <property type="entry name" value="Rbsml_uS13_C"/>
</dbReference>
<dbReference type="InterPro" id="IPR001892">
    <property type="entry name" value="Ribosomal_uS13"/>
</dbReference>
<dbReference type="InterPro" id="IPR010979">
    <property type="entry name" value="Ribosomal_uS13-like_H2TH"/>
</dbReference>
<dbReference type="InterPro" id="IPR019980">
    <property type="entry name" value="Ribosomal_uS13_bac-type"/>
</dbReference>
<dbReference type="InterPro" id="IPR018269">
    <property type="entry name" value="Ribosomal_uS13_CS"/>
</dbReference>
<dbReference type="NCBIfam" id="TIGR03631">
    <property type="entry name" value="uS13_bact"/>
    <property type="match status" value="1"/>
</dbReference>
<dbReference type="PANTHER" id="PTHR10871">
    <property type="entry name" value="30S RIBOSOMAL PROTEIN S13/40S RIBOSOMAL PROTEIN S18"/>
    <property type="match status" value="1"/>
</dbReference>
<dbReference type="PANTHER" id="PTHR10871:SF1">
    <property type="entry name" value="SMALL RIBOSOMAL SUBUNIT PROTEIN US13M"/>
    <property type="match status" value="1"/>
</dbReference>
<dbReference type="Pfam" id="PF00416">
    <property type="entry name" value="Ribosomal_S13"/>
    <property type="match status" value="1"/>
</dbReference>
<dbReference type="PIRSF" id="PIRSF002134">
    <property type="entry name" value="Ribosomal_S13"/>
    <property type="match status" value="1"/>
</dbReference>
<dbReference type="SUPFAM" id="SSF46946">
    <property type="entry name" value="S13-like H2TH domain"/>
    <property type="match status" value="1"/>
</dbReference>
<dbReference type="PROSITE" id="PS00646">
    <property type="entry name" value="RIBOSOMAL_S13_1"/>
    <property type="match status" value="1"/>
</dbReference>
<dbReference type="PROSITE" id="PS50159">
    <property type="entry name" value="RIBOSOMAL_S13_2"/>
    <property type="match status" value="1"/>
</dbReference>
<evidence type="ECO:0000255" key="1">
    <source>
        <dbReference type="HAMAP-Rule" id="MF_01315"/>
    </source>
</evidence>
<evidence type="ECO:0000256" key="2">
    <source>
        <dbReference type="SAM" id="MobiDB-lite"/>
    </source>
</evidence>
<evidence type="ECO:0000305" key="3"/>
<feature type="chain" id="PRO_0000306556" description="Small ribosomal subunit protein uS13">
    <location>
        <begin position="1"/>
        <end position="118"/>
    </location>
</feature>
<feature type="region of interest" description="Disordered" evidence="2">
    <location>
        <begin position="94"/>
        <end position="118"/>
    </location>
</feature>
<accession>Q0VSI1</accession>
<name>RS13_ALCBS</name>
<organism>
    <name type="scientific">Alcanivorax borkumensis (strain ATCC 700651 / DSM 11573 / NCIMB 13689 / SK2)</name>
    <dbReference type="NCBI Taxonomy" id="393595"/>
    <lineage>
        <taxon>Bacteria</taxon>
        <taxon>Pseudomonadati</taxon>
        <taxon>Pseudomonadota</taxon>
        <taxon>Gammaproteobacteria</taxon>
        <taxon>Oceanospirillales</taxon>
        <taxon>Alcanivoracaceae</taxon>
        <taxon>Alcanivorax</taxon>
    </lineage>
</organism>
<reference key="1">
    <citation type="journal article" date="2006" name="Nat. Biotechnol.">
        <title>Genome sequence of the ubiquitous hydrocarbon-degrading marine bacterium Alcanivorax borkumensis.</title>
        <authorList>
            <person name="Schneiker S."/>
            <person name="Martins dos Santos V.A.P."/>
            <person name="Bartels D."/>
            <person name="Bekel T."/>
            <person name="Brecht M."/>
            <person name="Buhrmester J."/>
            <person name="Chernikova T.N."/>
            <person name="Denaro R."/>
            <person name="Ferrer M."/>
            <person name="Gertler C."/>
            <person name="Goesmann A."/>
            <person name="Golyshina O.V."/>
            <person name="Kaminski F."/>
            <person name="Khachane A.N."/>
            <person name="Lang S."/>
            <person name="Linke B."/>
            <person name="McHardy A.C."/>
            <person name="Meyer F."/>
            <person name="Nechitaylo T."/>
            <person name="Puehler A."/>
            <person name="Regenhardt D."/>
            <person name="Rupp O."/>
            <person name="Sabirova J.S."/>
            <person name="Selbitschka W."/>
            <person name="Yakimov M.M."/>
            <person name="Timmis K.N."/>
            <person name="Vorhoelter F.-J."/>
            <person name="Weidner S."/>
            <person name="Kaiser O."/>
            <person name="Golyshin P.N."/>
        </authorList>
    </citation>
    <scope>NUCLEOTIDE SEQUENCE [LARGE SCALE GENOMIC DNA]</scope>
    <source>
        <strain>ATCC 700651 / DSM 11573 / NCIMB 13689 / SK2</strain>
    </source>
</reference>
<gene>
    <name evidence="1" type="primary">rpsM</name>
    <name type="ordered locus">ABO_0419</name>
</gene>
<protein>
    <recommendedName>
        <fullName evidence="1">Small ribosomal subunit protein uS13</fullName>
    </recommendedName>
    <alternativeName>
        <fullName evidence="3">30S ribosomal protein S13</fullName>
    </alternativeName>
</protein>
<proteinExistence type="inferred from homology"/>